<accession>O21598</accession>
<proteinExistence type="inferred from homology"/>
<reference key="1">
    <citation type="journal article" date="1998" name="Mol. Biol. Evol.">
        <title>Molecular systematics and paleobiogeography of the South American sigmodontine rodents.</title>
        <authorList>
            <person name="Engel S.R."/>
            <person name="Hogan K.M."/>
            <person name="Taylor J.F."/>
            <person name="Davis S.K."/>
        </authorList>
    </citation>
    <scope>NUCLEOTIDE SEQUENCE [GENOMIC DNA]</scope>
</reference>
<comment type="function">
    <text evidence="1">Core subunit of the mitochondrial membrane respiratory chain NADH dehydrogenase (Complex I) which catalyzes electron transfer from NADH through the respiratory chain, using ubiquinone as an electron acceptor. Essential for the catalytic activity of complex I.</text>
</comment>
<comment type="catalytic activity">
    <reaction evidence="1">
        <text>a ubiquinone + NADH + 5 H(+)(in) = a ubiquinol + NAD(+) + 4 H(+)(out)</text>
        <dbReference type="Rhea" id="RHEA:29091"/>
        <dbReference type="Rhea" id="RHEA-COMP:9565"/>
        <dbReference type="Rhea" id="RHEA-COMP:9566"/>
        <dbReference type="ChEBI" id="CHEBI:15378"/>
        <dbReference type="ChEBI" id="CHEBI:16389"/>
        <dbReference type="ChEBI" id="CHEBI:17976"/>
        <dbReference type="ChEBI" id="CHEBI:57540"/>
        <dbReference type="ChEBI" id="CHEBI:57945"/>
        <dbReference type="EC" id="7.1.1.2"/>
    </reaction>
</comment>
<comment type="subunit">
    <text evidence="1">Core subunit of respiratory chain NADH dehydrogenase (Complex I) which is composed of 45 different subunits. Interacts with TMEM186. Interacts with TMEM242 (By similarity).</text>
</comment>
<comment type="subcellular location">
    <subcellularLocation>
        <location evidence="2">Mitochondrion inner membrane</location>
        <topology evidence="3">Multi-pass membrane protein</topology>
    </subcellularLocation>
</comment>
<comment type="similarity">
    <text evidence="4">Belongs to the complex I subunit 3 family.</text>
</comment>
<protein>
    <recommendedName>
        <fullName evidence="1">NADH-ubiquinone oxidoreductase chain 3</fullName>
        <ecNumber evidence="1">7.1.1.2</ecNumber>
    </recommendedName>
    <alternativeName>
        <fullName>NADH dehydrogenase subunit 3</fullName>
    </alternativeName>
</protein>
<geneLocation type="mitochondrion"/>
<evidence type="ECO:0000250" key="1">
    <source>
        <dbReference type="UniProtKB" id="P03897"/>
    </source>
</evidence>
<evidence type="ECO:0000250" key="2">
    <source>
        <dbReference type="UniProtKB" id="P03898"/>
    </source>
</evidence>
<evidence type="ECO:0000255" key="3"/>
<evidence type="ECO:0000305" key="4"/>
<dbReference type="EC" id="7.1.1.2" evidence="1"/>
<dbReference type="EMBL" id="U83859">
    <property type="protein sequence ID" value="AAB87250.1"/>
    <property type="molecule type" value="Genomic_DNA"/>
</dbReference>
<dbReference type="PIR" id="T17094">
    <property type="entry name" value="T17094"/>
</dbReference>
<dbReference type="SMR" id="O21598"/>
<dbReference type="GO" id="GO:0005743">
    <property type="term" value="C:mitochondrial inner membrane"/>
    <property type="evidence" value="ECO:0000250"/>
    <property type="project" value="UniProtKB"/>
</dbReference>
<dbReference type="GO" id="GO:0030964">
    <property type="term" value="C:NADH dehydrogenase complex"/>
    <property type="evidence" value="ECO:0007669"/>
    <property type="project" value="TreeGrafter"/>
</dbReference>
<dbReference type="GO" id="GO:0008137">
    <property type="term" value="F:NADH dehydrogenase (ubiquinone) activity"/>
    <property type="evidence" value="ECO:0000250"/>
    <property type="project" value="UniProtKB"/>
</dbReference>
<dbReference type="GO" id="GO:0006120">
    <property type="term" value="P:mitochondrial electron transport, NADH to ubiquinone"/>
    <property type="evidence" value="ECO:0000250"/>
    <property type="project" value="UniProtKB"/>
</dbReference>
<dbReference type="FunFam" id="1.20.58.1610:FF:000004">
    <property type="entry name" value="NADH-quinone oxidoreductase subunit A"/>
    <property type="match status" value="1"/>
</dbReference>
<dbReference type="Gene3D" id="1.20.58.1610">
    <property type="entry name" value="NADH:ubiquinone/plastoquinone oxidoreductase, chain 3"/>
    <property type="match status" value="1"/>
</dbReference>
<dbReference type="InterPro" id="IPR000440">
    <property type="entry name" value="NADH_UbQ/plastoQ_OxRdtase_su3"/>
</dbReference>
<dbReference type="InterPro" id="IPR038430">
    <property type="entry name" value="NDAH_ubi_oxred_su3_sf"/>
</dbReference>
<dbReference type="PANTHER" id="PTHR11058">
    <property type="entry name" value="NADH-UBIQUINONE OXIDOREDUCTASE CHAIN 3"/>
    <property type="match status" value="1"/>
</dbReference>
<dbReference type="PANTHER" id="PTHR11058:SF9">
    <property type="entry name" value="NADH-UBIQUINONE OXIDOREDUCTASE CHAIN 3"/>
    <property type="match status" value="1"/>
</dbReference>
<dbReference type="Pfam" id="PF00507">
    <property type="entry name" value="Oxidored_q4"/>
    <property type="match status" value="1"/>
</dbReference>
<organism>
    <name type="scientific">Isthmomys pirrensis</name>
    <name type="common">Mount Pirri Isthmus rat</name>
    <dbReference type="NCBI Taxonomy" id="56321"/>
    <lineage>
        <taxon>Eukaryota</taxon>
        <taxon>Metazoa</taxon>
        <taxon>Chordata</taxon>
        <taxon>Craniata</taxon>
        <taxon>Vertebrata</taxon>
        <taxon>Euteleostomi</taxon>
        <taxon>Mammalia</taxon>
        <taxon>Eutheria</taxon>
        <taxon>Euarchontoglires</taxon>
        <taxon>Glires</taxon>
        <taxon>Rodentia</taxon>
        <taxon>Myomorpha</taxon>
        <taxon>Muroidea</taxon>
        <taxon>Cricetidae</taxon>
        <taxon>Neotominae</taxon>
        <taxon>Isthmomys</taxon>
    </lineage>
</organism>
<sequence length="115" mass="13174">MNMLTALLINITLSLCLITIAFWLPQLNMYTEKASPYECGFDPMSSARLPFSMKFFLVAITFLLFDLEIALLLPLPWAMQINNIKVMMLTSFILVSVLALGLAYEWMQKGLEWTE</sequence>
<name>NU3M_ISTPI</name>
<feature type="chain" id="PRO_0000117754" description="NADH-ubiquinone oxidoreductase chain 3">
    <location>
        <begin position="1"/>
        <end position="115"/>
    </location>
</feature>
<feature type="transmembrane region" description="Helical" evidence="3">
    <location>
        <begin position="4"/>
        <end position="24"/>
    </location>
</feature>
<feature type="transmembrane region" description="Helical" evidence="3">
    <location>
        <begin position="55"/>
        <end position="75"/>
    </location>
</feature>
<feature type="transmembrane region" description="Helical" evidence="3">
    <location>
        <begin position="86"/>
        <end position="106"/>
    </location>
</feature>
<keyword id="KW-0249">Electron transport</keyword>
<keyword id="KW-0472">Membrane</keyword>
<keyword id="KW-0496">Mitochondrion</keyword>
<keyword id="KW-0999">Mitochondrion inner membrane</keyword>
<keyword id="KW-0520">NAD</keyword>
<keyword id="KW-0679">Respiratory chain</keyword>
<keyword id="KW-1278">Translocase</keyword>
<keyword id="KW-0812">Transmembrane</keyword>
<keyword id="KW-1133">Transmembrane helix</keyword>
<keyword id="KW-0813">Transport</keyword>
<keyword id="KW-0830">Ubiquinone</keyword>
<gene>
    <name evidence="1" type="primary">MT-ND3</name>
    <name type="synonym">MTND3</name>
    <name type="synonym">NADH3</name>
    <name type="synonym">ND3</name>
</gene>